<protein>
    <recommendedName>
        <fullName evidence="2">Thaumatin-like protein 1</fullName>
        <ecNumber>3.2.1.-</ecNumber>
    </recommendedName>
    <alternativeName>
        <fullName evidence="6">Acidic thaumatin-like protein</fullName>
    </alternativeName>
    <alternativeName>
        <fullName>Beta-1,3-glucanase</fullName>
    </alternativeName>
    <alternativeName>
        <fullName>Thaumatin-like protein 1b</fullName>
    </alternativeName>
</protein>
<gene>
    <name type="primary">TLP1</name>
    <name type="synonym">TLP 1b</name>
</gene>
<evidence type="ECO:0000250" key="1"/>
<evidence type="ECO:0000250" key="2">
    <source>
        <dbReference type="UniProtKB" id="P83332"/>
    </source>
</evidence>
<evidence type="ECO:0000255" key="3">
    <source>
        <dbReference type="PROSITE-ProRule" id="PRU00699"/>
    </source>
</evidence>
<evidence type="ECO:0000269" key="4">
    <source>
    </source>
</evidence>
<evidence type="ECO:0000269" key="5">
    <source>
    </source>
</evidence>
<evidence type="ECO:0000312" key="6">
    <source>
        <dbReference type="EMBL" id="AEP84104.1"/>
    </source>
</evidence>
<dbReference type="EC" id="3.2.1.-"/>
<dbReference type="EMBL" id="JN624813">
    <property type="protein sequence ID" value="AEP84104.1"/>
    <property type="molecule type" value="Genomic_DNA"/>
</dbReference>
<dbReference type="SMR" id="G5DC91"/>
<dbReference type="Allergome" id="11650">
    <property type="allergen name" value="Man za TLP"/>
</dbReference>
<dbReference type="GO" id="GO:0005576">
    <property type="term" value="C:extracellular region"/>
    <property type="evidence" value="ECO:0007669"/>
    <property type="project" value="UniProtKB-SubCell"/>
</dbReference>
<dbReference type="GO" id="GO:0016798">
    <property type="term" value="F:hydrolase activity, acting on glycosyl bonds"/>
    <property type="evidence" value="ECO:0007669"/>
    <property type="project" value="UniProtKB-KW"/>
</dbReference>
<dbReference type="GO" id="GO:0006952">
    <property type="term" value="P:defense response"/>
    <property type="evidence" value="ECO:0007669"/>
    <property type="project" value="UniProtKB-KW"/>
</dbReference>
<dbReference type="FunFam" id="2.60.110.10:FF:000003">
    <property type="entry name" value="Thaumatin I"/>
    <property type="match status" value="1"/>
</dbReference>
<dbReference type="Gene3D" id="2.60.110.10">
    <property type="entry name" value="Thaumatin"/>
    <property type="match status" value="1"/>
</dbReference>
<dbReference type="InterPro" id="IPR037176">
    <property type="entry name" value="Osmotin/thaumatin-like_sf"/>
</dbReference>
<dbReference type="InterPro" id="IPR001938">
    <property type="entry name" value="Thaumatin"/>
</dbReference>
<dbReference type="InterPro" id="IPR017949">
    <property type="entry name" value="Thaumatin_CS"/>
</dbReference>
<dbReference type="PANTHER" id="PTHR31048">
    <property type="entry name" value="OS03G0233200 PROTEIN"/>
    <property type="match status" value="1"/>
</dbReference>
<dbReference type="Pfam" id="PF00314">
    <property type="entry name" value="Thaumatin"/>
    <property type="match status" value="1"/>
</dbReference>
<dbReference type="PIRSF" id="PIRSF002703">
    <property type="entry name" value="Thaumatin"/>
    <property type="match status" value="1"/>
</dbReference>
<dbReference type="PRINTS" id="PR00347">
    <property type="entry name" value="THAUMATIN"/>
</dbReference>
<dbReference type="SMART" id="SM00205">
    <property type="entry name" value="THN"/>
    <property type="match status" value="1"/>
</dbReference>
<dbReference type="SUPFAM" id="SSF49870">
    <property type="entry name" value="Osmotin, thaumatin-like protein"/>
    <property type="match status" value="1"/>
</dbReference>
<dbReference type="PROSITE" id="PS00316">
    <property type="entry name" value="THAUMATIN_1"/>
    <property type="match status" value="1"/>
</dbReference>
<dbReference type="PROSITE" id="PS51367">
    <property type="entry name" value="THAUMATIN_2"/>
    <property type="match status" value="1"/>
</dbReference>
<name>TLP1_MANZA</name>
<proteinExistence type="evidence at protein level"/>
<organism>
    <name type="scientific">Manilkara zapota</name>
    <name type="common">Sapodilla plum</name>
    <name type="synonym">Achras zapota</name>
    <dbReference type="NCBI Taxonomy" id="3741"/>
    <lineage>
        <taxon>Eukaryota</taxon>
        <taxon>Viridiplantae</taxon>
        <taxon>Streptophyta</taxon>
        <taxon>Embryophyta</taxon>
        <taxon>Tracheophyta</taxon>
        <taxon>Spermatophyta</taxon>
        <taxon>Magnoliopsida</taxon>
        <taxon>eudicotyledons</taxon>
        <taxon>Gunneridae</taxon>
        <taxon>Pentapetalae</taxon>
        <taxon>asterids</taxon>
        <taxon>Ericales</taxon>
        <taxon>Sapotaceae</taxon>
        <taxon>Sapotoideae</taxon>
        <taxon>Manilkara</taxon>
    </lineage>
</organism>
<comment type="function">
    <text evidence="4">Acidic thaumatin-like protein. Exhibits weak beta-1,3-glucanase activity with laminarin as substrate.</text>
</comment>
<comment type="subunit">
    <text evidence="4">Monomer.</text>
</comment>
<comment type="subcellular location">
    <subcellularLocation>
        <location evidence="1">Secreted</location>
    </subcellularLocation>
</comment>
<comment type="PTM">
    <text>Not glycosylated.</text>
</comment>
<comment type="allergen">
    <text evidence="4 5">Causes an allergic reaction in human. Binds to IgE.</text>
</comment>
<comment type="miscellaneous">
    <text>On the 2D-gel the determined pI of this protein is: 4.4.</text>
</comment>
<comment type="similarity">
    <text evidence="3">Belongs to the thaumatin family.</text>
</comment>
<keyword id="KW-0020">Allergen</keyword>
<keyword id="KW-0903">Direct protein sequencing</keyword>
<keyword id="KW-1015">Disulfide bond</keyword>
<keyword id="KW-0326">Glycosidase</keyword>
<keyword id="KW-0378">Hydrolase</keyword>
<keyword id="KW-0568">Pathogenesis-related protein</keyword>
<keyword id="KW-0611">Plant defense</keyword>
<keyword id="KW-0964">Secreted</keyword>
<reference key="1">
    <citation type="journal article" date="2013" name="Allergol. Int.">
        <title>Characterization and gene cloning of an acidic thaumatin-like protein (TLP 1), an allergen from sapodilla fruit (Manilkara zapota).</title>
        <authorList>
            <person name="Ashok Kumar H.G."/>
            <person name="Hegde V.L."/>
            <person name="Shetty S.M."/>
            <person name="Venkatesh Y.P."/>
        </authorList>
    </citation>
    <scope>PROTEIN SEQUENCE OF 1-25</scope>
    <scope>NUCLEOTIDE SEQUENCE [GENOMIC DNA] OF 7-207</scope>
    <scope>FUNCTION</scope>
    <scope>SUBUNIT</scope>
    <scope>ALLERGENICITY</scope>
    <scope>LACK OF GLYCOSYLATION</scope>
    <source>
        <strain>cv. Cricket Ball</strain>
        <tissue>Fruit</tissue>
        <tissue>Leaf</tissue>
    </source>
</reference>
<reference key="2">
    <citation type="journal article" date="2014" name="Mol. Immunol.">
        <title>In silico analyses of structural and allergenicity features of sapodilla (Manilkara zapota) acidic thaumatin-like protein in comparison with allergenic plant TLPs.</title>
        <authorList>
            <person name="Ashok Kumar H.G."/>
            <person name="Venkatesh Y.P."/>
        </authorList>
    </citation>
    <scope>3D-STRUCTURE MODELING</scope>
    <scope>ALLERGENICITY</scope>
</reference>
<sequence length="207" mass="21922">ATFDVVNQCTFTVWAGASPGGGKQLDQGQTWTITVAPGSTKARIWGRTGCNFDANGQGKCQTGDCNGLLQCQGYGSPPNTLAEFSLNQPNNLDYVDISLVDGFNIPMDFSPAAAGVCKDIRCATDITAQCPAELQAPGGCNNPCTVYKTNEYCCTNGQGTCGPTALSKFFKDRCPDAYSYPQDDPTSLFTCPAGTNYKVVFCPNLDA</sequence>
<accession>G5DC91</accession>
<accession>B3EWX8</accession>
<feature type="chain" id="PRO_0000415951" description="Thaumatin-like protein 1">
    <location>
        <begin position="1"/>
        <end position="207"/>
    </location>
</feature>
<feature type="disulfide bond" evidence="3">
    <location>
        <begin position="9"/>
        <end position="202"/>
    </location>
</feature>
<feature type="disulfide bond" evidence="3">
    <location>
        <begin position="50"/>
        <end position="60"/>
    </location>
</feature>
<feature type="disulfide bond" evidence="3">
    <location>
        <begin position="65"/>
        <end position="71"/>
    </location>
</feature>
<feature type="disulfide bond" evidence="3">
    <location>
        <begin position="117"/>
        <end position="191"/>
    </location>
</feature>
<feature type="disulfide bond" evidence="3">
    <location>
        <begin position="122"/>
        <end position="174"/>
    </location>
</feature>
<feature type="disulfide bond" evidence="3">
    <location>
        <begin position="130"/>
        <end position="140"/>
    </location>
</feature>
<feature type="disulfide bond" evidence="3">
    <location>
        <begin position="144"/>
        <end position="153"/>
    </location>
</feature>
<feature type="disulfide bond" evidence="3">
    <location>
        <begin position="154"/>
        <end position="161"/>
    </location>
</feature>